<keyword id="KW-0963">Cytoplasm</keyword>
<keyword id="KW-0238">DNA-binding</keyword>
<keyword id="KW-0520">NAD</keyword>
<keyword id="KW-0678">Repressor</keyword>
<keyword id="KW-0804">Transcription</keyword>
<keyword id="KW-0805">Transcription regulation</keyword>
<protein>
    <recommendedName>
        <fullName evidence="2">Redox-sensing transcriptional repressor Rex</fullName>
    </recommendedName>
</protein>
<proteinExistence type="inferred from homology"/>
<organism>
    <name type="scientific">Streptococcus pneumoniae (strain JJA)</name>
    <dbReference type="NCBI Taxonomy" id="488222"/>
    <lineage>
        <taxon>Bacteria</taxon>
        <taxon>Bacillati</taxon>
        <taxon>Bacillota</taxon>
        <taxon>Bacilli</taxon>
        <taxon>Lactobacillales</taxon>
        <taxon>Streptococcaceae</taxon>
        <taxon>Streptococcus</taxon>
    </lineage>
</organism>
<sequence>MKDKQFAIPKATAKRLSLYYRIFKRFHAEKIERANSKQIAEAIGIDSATVRRDFSYFGELGRRGFGYDVKKLMTFFADLLNDNSITNVMLVGIGNMGHALLHYRFHERNKMKIIMAFDLDDHPEVGTQTPDGIPIYGISQIKDKIKDADVKTAILTVPSVKSQEVANLLVDAGVKGILSFSPVHLHLPKDVVVQYVDLTSELQTLLYFMRKED</sequence>
<accession>C1CE77</accession>
<feature type="chain" id="PRO_1000164090" description="Redox-sensing transcriptional repressor Rex">
    <location>
        <begin position="1"/>
        <end position="213"/>
    </location>
</feature>
<feature type="DNA-binding region" description="H-T-H motif" evidence="2">
    <location>
        <begin position="18"/>
        <end position="57"/>
    </location>
</feature>
<feature type="binding site" evidence="2">
    <location>
        <begin position="92"/>
        <end position="97"/>
    </location>
    <ligand>
        <name>NAD(+)</name>
        <dbReference type="ChEBI" id="CHEBI:57540"/>
    </ligand>
</feature>
<dbReference type="EMBL" id="CP000919">
    <property type="protein sequence ID" value="ACO18619.1"/>
    <property type="molecule type" value="Genomic_DNA"/>
</dbReference>
<dbReference type="RefSeq" id="WP_000653403.1">
    <property type="nucleotide sequence ID" value="NC_012466.1"/>
</dbReference>
<dbReference type="SMR" id="C1CE77"/>
<dbReference type="KEGG" id="sjj:SPJ_1028"/>
<dbReference type="HOGENOM" id="CLU_061534_1_1_9"/>
<dbReference type="Proteomes" id="UP000002206">
    <property type="component" value="Chromosome"/>
</dbReference>
<dbReference type="GO" id="GO:0005737">
    <property type="term" value="C:cytoplasm"/>
    <property type="evidence" value="ECO:0007669"/>
    <property type="project" value="UniProtKB-SubCell"/>
</dbReference>
<dbReference type="GO" id="GO:0003677">
    <property type="term" value="F:DNA binding"/>
    <property type="evidence" value="ECO:0007669"/>
    <property type="project" value="UniProtKB-UniRule"/>
</dbReference>
<dbReference type="GO" id="GO:0003700">
    <property type="term" value="F:DNA-binding transcription factor activity"/>
    <property type="evidence" value="ECO:0007669"/>
    <property type="project" value="UniProtKB-UniRule"/>
</dbReference>
<dbReference type="GO" id="GO:0045892">
    <property type="term" value="P:negative regulation of DNA-templated transcription"/>
    <property type="evidence" value="ECO:0007669"/>
    <property type="project" value="InterPro"/>
</dbReference>
<dbReference type="GO" id="GO:0051775">
    <property type="term" value="P:response to redox state"/>
    <property type="evidence" value="ECO:0007669"/>
    <property type="project" value="InterPro"/>
</dbReference>
<dbReference type="Gene3D" id="3.40.50.720">
    <property type="entry name" value="NAD(P)-binding Rossmann-like Domain"/>
    <property type="match status" value="1"/>
</dbReference>
<dbReference type="Gene3D" id="1.10.10.10">
    <property type="entry name" value="Winged helix-like DNA-binding domain superfamily/Winged helix DNA-binding domain"/>
    <property type="match status" value="1"/>
</dbReference>
<dbReference type="HAMAP" id="MF_01131">
    <property type="entry name" value="Rex"/>
    <property type="match status" value="1"/>
</dbReference>
<dbReference type="InterPro" id="IPR003781">
    <property type="entry name" value="CoA-bd"/>
</dbReference>
<dbReference type="InterPro" id="IPR036291">
    <property type="entry name" value="NAD(P)-bd_dom_sf"/>
</dbReference>
<dbReference type="InterPro" id="IPR009718">
    <property type="entry name" value="Rex_DNA-bd_C_dom"/>
</dbReference>
<dbReference type="InterPro" id="IPR022876">
    <property type="entry name" value="Tscrpt_rep_Rex"/>
</dbReference>
<dbReference type="InterPro" id="IPR036388">
    <property type="entry name" value="WH-like_DNA-bd_sf"/>
</dbReference>
<dbReference type="InterPro" id="IPR036390">
    <property type="entry name" value="WH_DNA-bd_sf"/>
</dbReference>
<dbReference type="NCBIfam" id="NF003988">
    <property type="entry name" value="PRK05472.1-1"/>
    <property type="match status" value="1"/>
</dbReference>
<dbReference type="NCBIfam" id="NF003989">
    <property type="entry name" value="PRK05472.1-3"/>
    <property type="match status" value="1"/>
</dbReference>
<dbReference type="NCBIfam" id="NF003991">
    <property type="entry name" value="PRK05472.1-5"/>
    <property type="match status" value="1"/>
</dbReference>
<dbReference type="NCBIfam" id="NF003994">
    <property type="entry name" value="PRK05472.2-3"/>
    <property type="match status" value="1"/>
</dbReference>
<dbReference type="NCBIfam" id="NF003995">
    <property type="entry name" value="PRK05472.2-4"/>
    <property type="match status" value="1"/>
</dbReference>
<dbReference type="NCBIfam" id="NF003996">
    <property type="entry name" value="PRK05472.2-5"/>
    <property type="match status" value="1"/>
</dbReference>
<dbReference type="PANTHER" id="PTHR35786">
    <property type="entry name" value="REDOX-SENSING TRANSCRIPTIONAL REPRESSOR REX"/>
    <property type="match status" value="1"/>
</dbReference>
<dbReference type="PANTHER" id="PTHR35786:SF1">
    <property type="entry name" value="REDOX-SENSING TRANSCRIPTIONAL REPRESSOR REX 1"/>
    <property type="match status" value="1"/>
</dbReference>
<dbReference type="Pfam" id="PF02629">
    <property type="entry name" value="CoA_binding"/>
    <property type="match status" value="1"/>
</dbReference>
<dbReference type="Pfam" id="PF06971">
    <property type="entry name" value="Put_DNA-bind_N"/>
    <property type="match status" value="1"/>
</dbReference>
<dbReference type="SMART" id="SM00881">
    <property type="entry name" value="CoA_binding"/>
    <property type="match status" value="1"/>
</dbReference>
<dbReference type="SUPFAM" id="SSF51735">
    <property type="entry name" value="NAD(P)-binding Rossmann-fold domains"/>
    <property type="match status" value="1"/>
</dbReference>
<dbReference type="SUPFAM" id="SSF46785">
    <property type="entry name" value="Winged helix' DNA-binding domain"/>
    <property type="match status" value="1"/>
</dbReference>
<gene>
    <name evidence="2" type="primary">rex</name>
    <name type="ordered locus">SPJ_1028</name>
</gene>
<comment type="function">
    <text evidence="1 2">Modulates transcription in response to changes in cellular NADH/NAD(+) redox state (By similarity). Binds to the promoter of the aldehyde-alcohol dehydrogenase adhE gene. Functions as a redox-dependent repressor of adhE expression (By similarity).</text>
</comment>
<comment type="subunit">
    <text evidence="2">Homodimer.</text>
</comment>
<comment type="subcellular location">
    <subcellularLocation>
        <location evidence="2">Cytoplasm</location>
    </subcellularLocation>
</comment>
<comment type="similarity">
    <text evidence="2">Belongs to the transcriptional regulatory Rex family.</text>
</comment>
<evidence type="ECO:0000250" key="1">
    <source>
        <dbReference type="UniProtKB" id="Q04KJ6"/>
    </source>
</evidence>
<evidence type="ECO:0000255" key="2">
    <source>
        <dbReference type="HAMAP-Rule" id="MF_01131"/>
    </source>
</evidence>
<name>REX_STRZJ</name>
<reference key="1">
    <citation type="journal article" date="2010" name="Genome Biol.">
        <title>Structure and dynamics of the pan-genome of Streptococcus pneumoniae and closely related species.</title>
        <authorList>
            <person name="Donati C."/>
            <person name="Hiller N.L."/>
            <person name="Tettelin H."/>
            <person name="Muzzi A."/>
            <person name="Croucher N.J."/>
            <person name="Angiuoli S.V."/>
            <person name="Oggioni M."/>
            <person name="Dunning Hotopp J.C."/>
            <person name="Hu F.Z."/>
            <person name="Riley D.R."/>
            <person name="Covacci A."/>
            <person name="Mitchell T.J."/>
            <person name="Bentley S.D."/>
            <person name="Kilian M."/>
            <person name="Ehrlich G.D."/>
            <person name="Rappuoli R."/>
            <person name="Moxon E.R."/>
            <person name="Masignani V."/>
        </authorList>
    </citation>
    <scope>NUCLEOTIDE SEQUENCE [LARGE SCALE GENOMIC DNA]</scope>
    <source>
        <strain>JJA</strain>
    </source>
</reference>